<comment type="function">
    <text evidence="1">ATP-dependent RNA helicase involved in mRNA turnover, and more specifically in mRNA decapping. Is involved in G1/S DNA-damage checkpoint recovery, probably through the regulation of the translational status of a subset of mRNAs. May also have a role in translation and mRNA nuclear export (By similarity).</text>
</comment>
<comment type="catalytic activity">
    <reaction>
        <text>ATP + H2O = ADP + phosphate + H(+)</text>
        <dbReference type="Rhea" id="RHEA:13065"/>
        <dbReference type="ChEBI" id="CHEBI:15377"/>
        <dbReference type="ChEBI" id="CHEBI:15378"/>
        <dbReference type="ChEBI" id="CHEBI:30616"/>
        <dbReference type="ChEBI" id="CHEBI:43474"/>
        <dbReference type="ChEBI" id="CHEBI:456216"/>
        <dbReference type="EC" id="3.6.4.13"/>
    </reaction>
</comment>
<comment type="subcellular location">
    <subcellularLocation>
        <location evidence="1">Cytoplasm</location>
        <location evidence="1">P-body</location>
    </subcellularLocation>
    <text evidence="1">Is concentrated in several cytoplasmic foci called P bodies (or cytoplasmic processing bodies) which represent sites of mRNA decapping and 5' to 3' exonucleotidic decay.</text>
</comment>
<comment type="domain">
    <text>The Q motif is unique to and characteristic of the DEAD box family of RNA helicases and controls ATP binding and hydrolysis.</text>
</comment>
<comment type="similarity">
    <text evidence="5">Belongs to the DEAD box helicase family. DDX6/DHH1 subfamily.</text>
</comment>
<name>DHH1_YARLI</name>
<keyword id="KW-0067">ATP-binding</keyword>
<keyword id="KW-0963">Cytoplasm</keyword>
<keyword id="KW-0347">Helicase</keyword>
<keyword id="KW-0378">Hydrolase</keyword>
<keyword id="KW-0507">mRNA processing</keyword>
<keyword id="KW-0509">mRNA transport</keyword>
<keyword id="KW-0547">Nucleotide-binding</keyword>
<keyword id="KW-1185">Reference proteome</keyword>
<keyword id="KW-0694">RNA-binding</keyword>
<keyword id="KW-0810">Translation regulation</keyword>
<keyword id="KW-0813">Transport</keyword>
<reference key="1">
    <citation type="submission" date="1998-09" db="EMBL/GenBank/DDBJ databases">
        <title>Isolation and characterization of YlDHH1 of Yarrowia lipolytica, a gene encoding for a RNA helicase ATP dependent.</title>
        <authorList>
            <person name="Ferminan E."/>
            <person name="Dominguez A."/>
        </authorList>
    </citation>
    <scope>NUCLEOTIDE SEQUENCE [GENOMIC DNA]</scope>
    <source>
        <strain>E 129</strain>
    </source>
</reference>
<reference key="2">
    <citation type="journal article" date="2004" name="Nature">
        <title>Genome evolution in yeasts.</title>
        <authorList>
            <person name="Dujon B."/>
            <person name="Sherman D."/>
            <person name="Fischer G."/>
            <person name="Durrens P."/>
            <person name="Casaregola S."/>
            <person name="Lafontaine I."/>
            <person name="de Montigny J."/>
            <person name="Marck C."/>
            <person name="Neuveglise C."/>
            <person name="Talla E."/>
            <person name="Goffard N."/>
            <person name="Frangeul L."/>
            <person name="Aigle M."/>
            <person name="Anthouard V."/>
            <person name="Babour A."/>
            <person name="Barbe V."/>
            <person name="Barnay S."/>
            <person name="Blanchin S."/>
            <person name="Beckerich J.-M."/>
            <person name="Beyne E."/>
            <person name="Bleykasten C."/>
            <person name="Boisrame A."/>
            <person name="Boyer J."/>
            <person name="Cattolico L."/>
            <person name="Confanioleri F."/>
            <person name="de Daruvar A."/>
            <person name="Despons L."/>
            <person name="Fabre E."/>
            <person name="Fairhead C."/>
            <person name="Ferry-Dumazet H."/>
            <person name="Groppi A."/>
            <person name="Hantraye F."/>
            <person name="Hennequin C."/>
            <person name="Jauniaux N."/>
            <person name="Joyet P."/>
            <person name="Kachouri R."/>
            <person name="Kerrest A."/>
            <person name="Koszul R."/>
            <person name="Lemaire M."/>
            <person name="Lesur I."/>
            <person name="Ma L."/>
            <person name="Muller H."/>
            <person name="Nicaud J.-M."/>
            <person name="Nikolski M."/>
            <person name="Oztas S."/>
            <person name="Ozier-Kalogeropoulos O."/>
            <person name="Pellenz S."/>
            <person name="Potier S."/>
            <person name="Richard G.-F."/>
            <person name="Straub M.-L."/>
            <person name="Suleau A."/>
            <person name="Swennen D."/>
            <person name="Tekaia F."/>
            <person name="Wesolowski-Louvel M."/>
            <person name="Westhof E."/>
            <person name="Wirth B."/>
            <person name="Zeniou-Meyer M."/>
            <person name="Zivanovic Y."/>
            <person name="Bolotin-Fukuhara M."/>
            <person name="Thierry A."/>
            <person name="Bouchier C."/>
            <person name="Caudron B."/>
            <person name="Scarpelli C."/>
            <person name="Gaillardin C."/>
            <person name="Weissenbach J."/>
            <person name="Wincker P."/>
            <person name="Souciet J.-L."/>
        </authorList>
    </citation>
    <scope>NUCLEOTIDE SEQUENCE [LARGE SCALE GENOMIC DNA]</scope>
    <source>
        <strain>CLIB 122 / E 150</strain>
    </source>
</reference>
<accession>Q6C0X2</accession>
<accession>Q9UUU4</accession>
<proteinExistence type="inferred from homology"/>
<protein>
    <recommendedName>
        <fullName>ATP-dependent RNA helicase DHH1</fullName>
        <ecNumber>3.6.4.13</ecNumber>
    </recommendedName>
</protein>
<dbReference type="EC" id="3.6.4.13"/>
<dbReference type="EMBL" id="AJ011564">
    <property type="protein sequence ID" value="CAB65518.1"/>
    <property type="molecule type" value="Genomic_DNA"/>
</dbReference>
<dbReference type="EMBL" id="CR382132">
    <property type="protein sequence ID" value="CAG78499.1"/>
    <property type="molecule type" value="Genomic_DNA"/>
</dbReference>
<dbReference type="RefSeq" id="XP_505690.1">
    <property type="nucleotide sequence ID" value="XM_505690.1"/>
</dbReference>
<dbReference type="SMR" id="Q6C0X2"/>
<dbReference type="FunCoup" id="Q6C0X2">
    <property type="interactions" value="1376"/>
</dbReference>
<dbReference type="STRING" id="284591.Q6C0X2"/>
<dbReference type="EnsemblFungi" id="CAG78499">
    <property type="protein sequence ID" value="CAG78499"/>
    <property type="gene ID" value="YALI0_F21032g"/>
</dbReference>
<dbReference type="KEGG" id="yli:2908268"/>
<dbReference type="VEuPathDB" id="FungiDB:YALI0_F21032g"/>
<dbReference type="HOGENOM" id="CLU_003041_30_0_1"/>
<dbReference type="InParanoid" id="Q6C0X2"/>
<dbReference type="OMA" id="PRDHQMI"/>
<dbReference type="OrthoDB" id="113316at4891"/>
<dbReference type="Proteomes" id="UP000001300">
    <property type="component" value="Chromosome F"/>
</dbReference>
<dbReference type="GO" id="GO:0010494">
    <property type="term" value="C:cytoplasmic stress granule"/>
    <property type="evidence" value="ECO:0000318"/>
    <property type="project" value="GO_Central"/>
</dbReference>
<dbReference type="GO" id="GO:0000932">
    <property type="term" value="C:P-body"/>
    <property type="evidence" value="ECO:0000318"/>
    <property type="project" value="GO_Central"/>
</dbReference>
<dbReference type="GO" id="GO:0005524">
    <property type="term" value="F:ATP binding"/>
    <property type="evidence" value="ECO:0007669"/>
    <property type="project" value="UniProtKB-KW"/>
</dbReference>
<dbReference type="GO" id="GO:0016887">
    <property type="term" value="F:ATP hydrolysis activity"/>
    <property type="evidence" value="ECO:0007669"/>
    <property type="project" value="RHEA"/>
</dbReference>
<dbReference type="GO" id="GO:0003729">
    <property type="term" value="F:mRNA binding"/>
    <property type="evidence" value="ECO:0000318"/>
    <property type="project" value="GO_Central"/>
</dbReference>
<dbReference type="GO" id="GO:0003724">
    <property type="term" value="F:RNA helicase activity"/>
    <property type="evidence" value="ECO:0007669"/>
    <property type="project" value="UniProtKB-EC"/>
</dbReference>
<dbReference type="GO" id="GO:0006397">
    <property type="term" value="P:mRNA processing"/>
    <property type="evidence" value="ECO:0007669"/>
    <property type="project" value="UniProtKB-KW"/>
</dbReference>
<dbReference type="GO" id="GO:0051028">
    <property type="term" value="P:mRNA transport"/>
    <property type="evidence" value="ECO:0007669"/>
    <property type="project" value="UniProtKB-KW"/>
</dbReference>
<dbReference type="GO" id="GO:0017148">
    <property type="term" value="P:negative regulation of translation"/>
    <property type="evidence" value="ECO:0000318"/>
    <property type="project" value="GO_Central"/>
</dbReference>
<dbReference type="GO" id="GO:0033962">
    <property type="term" value="P:P-body assembly"/>
    <property type="evidence" value="ECO:0000318"/>
    <property type="project" value="GO_Central"/>
</dbReference>
<dbReference type="GO" id="GO:0034063">
    <property type="term" value="P:stress granule assembly"/>
    <property type="evidence" value="ECO:0000318"/>
    <property type="project" value="GO_Central"/>
</dbReference>
<dbReference type="CDD" id="cd17940">
    <property type="entry name" value="DEADc_DDX6"/>
    <property type="match status" value="1"/>
</dbReference>
<dbReference type="CDD" id="cd18787">
    <property type="entry name" value="SF2_C_DEAD"/>
    <property type="match status" value="1"/>
</dbReference>
<dbReference type="FunFam" id="3.40.50.300:FF:000114">
    <property type="entry name" value="ATP-dependent RNA helicase DDX6"/>
    <property type="match status" value="1"/>
</dbReference>
<dbReference type="FunFam" id="3.40.50.300:FF:000364">
    <property type="entry name" value="ATP-dependent RNA helicase DDX6"/>
    <property type="match status" value="1"/>
</dbReference>
<dbReference type="Gene3D" id="3.40.50.300">
    <property type="entry name" value="P-loop containing nucleotide triphosphate hydrolases"/>
    <property type="match status" value="2"/>
</dbReference>
<dbReference type="InterPro" id="IPR011545">
    <property type="entry name" value="DEAD/DEAH_box_helicase_dom"/>
</dbReference>
<dbReference type="InterPro" id="IPR014001">
    <property type="entry name" value="Helicase_ATP-bd"/>
</dbReference>
<dbReference type="InterPro" id="IPR001650">
    <property type="entry name" value="Helicase_C-like"/>
</dbReference>
<dbReference type="InterPro" id="IPR027417">
    <property type="entry name" value="P-loop_NTPase"/>
</dbReference>
<dbReference type="InterPro" id="IPR000629">
    <property type="entry name" value="RNA-helicase_DEAD-box_CS"/>
</dbReference>
<dbReference type="InterPro" id="IPR014014">
    <property type="entry name" value="RNA_helicase_DEAD_Q_motif"/>
</dbReference>
<dbReference type="PANTHER" id="PTHR47960">
    <property type="entry name" value="DEAD-BOX ATP-DEPENDENT RNA HELICASE 50"/>
    <property type="match status" value="1"/>
</dbReference>
<dbReference type="Pfam" id="PF00270">
    <property type="entry name" value="DEAD"/>
    <property type="match status" value="1"/>
</dbReference>
<dbReference type="Pfam" id="PF00271">
    <property type="entry name" value="Helicase_C"/>
    <property type="match status" value="1"/>
</dbReference>
<dbReference type="SMART" id="SM00487">
    <property type="entry name" value="DEXDc"/>
    <property type="match status" value="1"/>
</dbReference>
<dbReference type="SMART" id="SM00490">
    <property type="entry name" value="HELICc"/>
    <property type="match status" value="1"/>
</dbReference>
<dbReference type="SUPFAM" id="SSF52540">
    <property type="entry name" value="P-loop containing nucleoside triphosphate hydrolases"/>
    <property type="match status" value="1"/>
</dbReference>
<dbReference type="PROSITE" id="PS00039">
    <property type="entry name" value="DEAD_ATP_HELICASE"/>
    <property type="match status" value="1"/>
</dbReference>
<dbReference type="PROSITE" id="PS51192">
    <property type="entry name" value="HELICASE_ATP_BIND_1"/>
    <property type="match status" value="1"/>
</dbReference>
<dbReference type="PROSITE" id="PS51194">
    <property type="entry name" value="HELICASE_CTER"/>
    <property type="match status" value="1"/>
</dbReference>
<dbReference type="PROSITE" id="PS51195">
    <property type="entry name" value="Q_MOTIF"/>
    <property type="match status" value="1"/>
</dbReference>
<evidence type="ECO:0000250" key="1"/>
<evidence type="ECO:0000255" key="2">
    <source>
        <dbReference type="PROSITE-ProRule" id="PRU00541"/>
    </source>
</evidence>
<evidence type="ECO:0000255" key="3">
    <source>
        <dbReference type="PROSITE-ProRule" id="PRU00542"/>
    </source>
</evidence>
<evidence type="ECO:0000256" key="4">
    <source>
        <dbReference type="SAM" id="MobiDB-lite"/>
    </source>
</evidence>
<evidence type="ECO:0000305" key="5"/>
<sequence>MSEWKESLNVPKKDTRHKTEDVTATKGTGFEDFFLKRELLMGIFEAGFENPSPIQEEAIPIALAGRDILARAKNGTGKTAAFVIPALQQVNPKVNKIQALIMVPTRELALQTSQVCKTLGKHLGIKVMVTTGGTNLRDDIMRLEDTVHVLVGTPGRVLDLAGKGVADLSESPMFIMDEADKLLSPDFTPIIEQVLHFFPEDRQILLFSATFPLTVKAFMDRNLHKPYEINLMDELTLRGITQYYAFVDEKQKLHCLNTLFSKLDINQSIIFCNSTVRVELLARKITELGYSCYYSHAKMIQSHRNRVFHEFRNGTCRNLVCSDLLTRGIDIQAVNVVINFDFPKNAETYLHRIGRSGRFGHLGIAINLINWNDRYNLYKIEQELGTEIKPIPAQIDKNLYVAESSENIPRPFPIADMPRGKESKRNEQFQPQQNQNQQQQQDGQNQHSLGPVPPQGPPQGIPGPGYGYPPPQGFPQGMPPQGMPPQGAGGYMPPTPYGYQQQGFPPQPPQGFNNGQPQQPSQ</sequence>
<gene>
    <name type="primary">DHH1</name>
    <name type="ordered locus">YALI0F21032g</name>
</gene>
<feature type="chain" id="PRO_0000232193" description="ATP-dependent RNA helicase DHH1">
    <location>
        <begin position="1"/>
        <end position="522"/>
    </location>
</feature>
<feature type="domain" description="Helicase ATP-binding" evidence="2">
    <location>
        <begin position="59"/>
        <end position="229"/>
    </location>
</feature>
<feature type="domain" description="Helicase C-terminal" evidence="3">
    <location>
        <begin position="239"/>
        <end position="399"/>
    </location>
</feature>
<feature type="region of interest" description="Disordered" evidence="4">
    <location>
        <begin position="1"/>
        <end position="20"/>
    </location>
</feature>
<feature type="region of interest" description="Disordered" evidence="4">
    <location>
        <begin position="408"/>
        <end position="522"/>
    </location>
</feature>
<feature type="short sequence motif" description="Q motif">
    <location>
        <begin position="28"/>
        <end position="56"/>
    </location>
</feature>
<feature type="short sequence motif" description="DEAD box">
    <location>
        <begin position="177"/>
        <end position="180"/>
    </location>
</feature>
<feature type="compositionally biased region" description="Basic and acidic residues" evidence="4">
    <location>
        <begin position="418"/>
        <end position="427"/>
    </location>
</feature>
<feature type="compositionally biased region" description="Low complexity" evidence="4">
    <location>
        <begin position="428"/>
        <end position="446"/>
    </location>
</feature>
<feature type="compositionally biased region" description="Pro residues" evidence="4">
    <location>
        <begin position="451"/>
        <end position="483"/>
    </location>
</feature>
<feature type="compositionally biased region" description="Low complexity" evidence="4">
    <location>
        <begin position="497"/>
        <end position="522"/>
    </location>
</feature>
<feature type="binding site" evidence="2">
    <location>
        <begin position="72"/>
        <end position="79"/>
    </location>
    <ligand>
        <name>ATP</name>
        <dbReference type="ChEBI" id="CHEBI:30616"/>
    </ligand>
</feature>
<feature type="sequence conflict" description="In Ref. 1; CAB65518." evidence="5" ref="1">
    <original>KG</original>
    <variation>RK</variation>
    <location>
        <begin position="163"/>
        <end position="164"/>
    </location>
</feature>
<feature type="sequence conflict" description="In Ref. 1; CAB65518." evidence="5" ref="1">
    <original>ED</original>
    <variation>WTT</variation>
    <location>
        <begin position="200"/>
        <end position="201"/>
    </location>
</feature>
<feature type="sequence conflict" description="In Ref. 1; CAB65518." evidence="5" ref="1">
    <original>L</original>
    <variation>V</variation>
    <location>
        <position position="206"/>
    </location>
</feature>
<feature type="sequence conflict" description="In Ref. 1; CAB65518." evidence="5" ref="1">
    <original>F</original>
    <variation>S</variation>
    <location>
        <position position="211"/>
    </location>
</feature>
<feature type="sequence conflict" description="In Ref. 1; CAB65518." evidence="5" ref="1">
    <original>VPPQG</original>
    <variation>YLPRV</variation>
    <location>
        <begin position="452"/>
        <end position="456"/>
    </location>
</feature>
<organism>
    <name type="scientific">Yarrowia lipolytica (strain CLIB 122 / E 150)</name>
    <name type="common">Yeast</name>
    <name type="synonym">Candida lipolytica</name>
    <dbReference type="NCBI Taxonomy" id="284591"/>
    <lineage>
        <taxon>Eukaryota</taxon>
        <taxon>Fungi</taxon>
        <taxon>Dikarya</taxon>
        <taxon>Ascomycota</taxon>
        <taxon>Saccharomycotina</taxon>
        <taxon>Dipodascomycetes</taxon>
        <taxon>Dipodascales</taxon>
        <taxon>Dipodascales incertae sedis</taxon>
        <taxon>Yarrowia</taxon>
    </lineage>
</organism>